<name>TVB4_MOUSE</name>
<keyword id="KW-1064">Adaptive immunity</keyword>
<keyword id="KW-1015">Disulfide bond</keyword>
<keyword id="KW-0391">Immunity</keyword>
<keyword id="KW-0393">Immunoglobulin domain</keyword>
<keyword id="KW-0675">Receptor</keyword>
<keyword id="KW-1185">Reference proteome</keyword>
<keyword id="KW-0732">Signal</keyword>
<keyword id="KW-1279">T cell receptor</keyword>
<feature type="signal peptide">
    <location>
        <begin position="1"/>
        <end position="21"/>
    </location>
</feature>
<feature type="chain" id="PRO_0000033602" description="T-cell receptor beta chain V region LB2">
    <location>
        <begin position="22"/>
        <end position="136"/>
    </location>
</feature>
<feature type="region of interest" description="V segment">
    <location>
        <begin position="22"/>
        <end position="116"/>
    </location>
</feature>
<feature type="region of interest" description="D segment">
    <location>
        <begin position="117"/>
        <end position="120"/>
    </location>
</feature>
<feature type="region of interest" description="J segment">
    <location>
        <begin position="121"/>
        <end position="136"/>
    </location>
</feature>
<feature type="disulfide bond" evidence="1">
    <location>
        <begin position="45"/>
        <end position="113"/>
    </location>
</feature>
<feature type="non-terminal residue">
    <location>
        <position position="136"/>
    </location>
</feature>
<evidence type="ECO:0000255" key="1">
    <source>
        <dbReference type="PROSITE-ProRule" id="PRU00114"/>
    </source>
</evidence>
<sequence>MNKWVFCWVTLCLLTVETTHGDGGIITQTPKFLIGQEGQKLTLKCQQNFNHDTMYWYRQDSGKGLRLIYYSITENDLQKGDLSEGYDASREKKSSFSLTVTSAQKNEMTVFLCASSIRLASAETLYFGSGTRLTVL</sequence>
<proteinExistence type="evidence at transcript level"/>
<reference key="1">
    <citation type="journal article" date="1984" name="Nature">
        <title>Structure, expression and divergence of T-cell receptor beta-chain variable regions.</title>
        <authorList>
            <person name="Patten P."/>
            <person name="Yokota T."/>
            <person name="Rothbard J."/>
            <person name="Chien Y."/>
            <person name="Arai K."/>
            <person name="Davis M.M."/>
        </authorList>
    </citation>
    <scope>NUCLEOTIDE SEQUENCE [MRNA]</scope>
</reference>
<organism>
    <name type="scientific">Mus musculus</name>
    <name type="common">Mouse</name>
    <dbReference type="NCBI Taxonomy" id="10090"/>
    <lineage>
        <taxon>Eukaryota</taxon>
        <taxon>Metazoa</taxon>
        <taxon>Chordata</taxon>
        <taxon>Craniata</taxon>
        <taxon>Vertebrata</taxon>
        <taxon>Euteleostomi</taxon>
        <taxon>Mammalia</taxon>
        <taxon>Eutheria</taxon>
        <taxon>Euarchontoglires</taxon>
        <taxon>Glires</taxon>
        <taxon>Rodentia</taxon>
        <taxon>Myomorpha</taxon>
        <taxon>Muroidea</taxon>
        <taxon>Muridae</taxon>
        <taxon>Murinae</taxon>
        <taxon>Mus</taxon>
        <taxon>Mus</taxon>
    </lineage>
</organism>
<accession>P04212</accession>
<comment type="miscellaneous">
    <text>This sequence was derived from a T-helper clone.</text>
</comment>
<protein>
    <recommendedName>
        <fullName>T-cell receptor beta chain V region LB2</fullName>
    </recommendedName>
</protein>
<dbReference type="EMBL" id="X01643">
    <property type="protein sequence ID" value="CAA25800.1"/>
    <property type="molecule type" value="mRNA"/>
</dbReference>
<dbReference type="PIR" id="A02007">
    <property type="entry name" value="RWMSLB"/>
</dbReference>
<dbReference type="SMR" id="P04212"/>
<dbReference type="FunCoup" id="P04212">
    <property type="interactions" value="1086"/>
</dbReference>
<dbReference type="IntAct" id="P04212">
    <property type="interactions" value="1"/>
</dbReference>
<dbReference type="UCSC" id="uc009boj.1">
    <property type="organism name" value="mouse"/>
</dbReference>
<dbReference type="InParanoid" id="P04212"/>
<dbReference type="Proteomes" id="UP000000589">
    <property type="component" value="Unplaced"/>
</dbReference>
<dbReference type="RNAct" id="P04212">
    <property type="molecule type" value="protein"/>
</dbReference>
<dbReference type="GO" id="GO:0005886">
    <property type="term" value="C:plasma membrane"/>
    <property type="evidence" value="ECO:0000318"/>
    <property type="project" value="GO_Central"/>
</dbReference>
<dbReference type="GO" id="GO:0042101">
    <property type="term" value="C:T cell receptor complex"/>
    <property type="evidence" value="ECO:0007669"/>
    <property type="project" value="UniProtKB-KW"/>
</dbReference>
<dbReference type="GO" id="GO:0002250">
    <property type="term" value="P:adaptive immune response"/>
    <property type="evidence" value="ECO:0007669"/>
    <property type="project" value="UniProtKB-KW"/>
</dbReference>
<dbReference type="GO" id="GO:0007166">
    <property type="term" value="P:cell surface receptor signaling pathway"/>
    <property type="evidence" value="ECO:0000318"/>
    <property type="project" value="GO_Central"/>
</dbReference>
<dbReference type="CDD" id="cd05899">
    <property type="entry name" value="IgV_TCR_beta"/>
    <property type="match status" value="1"/>
</dbReference>
<dbReference type="Gene3D" id="2.60.40.10">
    <property type="entry name" value="Immunoglobulins"/>
    <property type="match status" value="1"/>
</dbReference>
<dbReference type="InterPro" id="IPR007110">
    <property type="entry name" value="Ig-like_dom"/>
</dbReference>
<dbReference type="InterPro" id="IPR036179">
    <property type="entry name" value="Ig-like_dom_sf"/>
</dbReference>
<dbReference type="InterPro" id="IPR013783">
    <property type="entry name" value="Ig-like_fold"/>
</dbReference>
<dbReference type="InterPro" id="IPR003599">
    <property type="entry name" value="Ig_sub"/>
</dbReference>
<dbReference type="InterPro" id="IPR013106">
    <property type="entry name" value="Ig_V-set"/>
</dbReference>
<dbReference type="InterPro" id="IPR050413">
    <property type="entry name" value="TCR_beta_variable"/>
</dbReference>
<dbReference type="PANTHER" id="PTHR23268:SF28">
    <property type="entry name" value="T CELL RECEPTOR BETA VARIABLE 19"/>
    <property type="match status" value="1"/>
</dbReference>
<dbReference type="PANTHER" id="PTHR23268">
    <property type="entry name" value="T-CELL RECEPTOR BETA CHAIN"/>
    <property type="match status" value="1"/>
</dbReference>
<dbReference type="Pfam" id="PF07686">
    <property type="entry name" value="V-set"/>
    <property type="match status" value="1"/>
</dbReference>
<dbReference type="SMART" id="SM00409">
    <property type="entry name" value="IG"/>
    <property type="match status" value="1"/>
</dbReference>
<dbReference type="SUPFAM" id="SSF48726">
    <property type="entry name" value="Immunoglobulin"/>
    <property type="match status" value="1"/>
</dbReference>
<dbReference type="PROSITE" id="PS50835">
    <property type="entry name" value="IG_LIKE"/>
    <property type="match status" value="1"/>
</dbReference>